<protein>
    <recommendedName>
        <fullName evidence="1">4-hydroxy-3-methylbut-2-enyl diphosphate reductase</fullName>
        <shortName evidence="1">HMBPP reductase</shortName>
        <ecNumber evidence="1">1.17.7.4</ecNumber>
    </recommendedName>
</protein>
<gene>
    <name evidence="1" type="primary">ispH</name>
    <name type="ordered locus">BF3748</name>
</gene>
<sequence>MVKVEIDEGSGFCFGVVTAIHKAEEELAKGVTLYCLGDIVHNSREVERLKEMGLITINHEEFKQLHNAKVLLRAHGEPPETYIIAKENNIEIIDATCPVVLRLQKRIKQEYMQEDLDEKQIVIYGKNGHAEVLGLVGQTTGKAIVIEKLDEARRLDFSKSIRLYSQTTKSLDEFWEIVEYIKEHISPDVTFEYYDTICRQVANRMPNLRKFAASHDLIFFVSGKKSSNGKMLFEECKKVNPNSHLIDSADEIDDSLLPGVNSIGVCGATSTPKWLMEEISEAIKAQIKRQ</sequence>
<evidence type="ECO:0000255" key="1">
    <source>
        <dbReference type="HAMAP-Rule" id="MF_00191"/>
    </source>
</evidence>
<dbReference type="EC" id="1.17.7.4" evidence="1"/>
<dbReference type="EMBL" id="AP006841">
    <property type="protein sequence ID" value="BAD50490.1"/>
    <property type="molecule type" value="Genomic_DNA"/>
</dbReference>
<dbReference type="RefSeq" id="WP_005797949.1">
    <property type="nucleotide sequence ID" value="NC_006347.1"/>
</dbReference>
<dbReference type="RefSeq" id="YP_101024.1">
    <property type="nucleotide sequence ID" value="NC_006347.1"/>
</dbReference>
<dbReference type="SMR" id="Q64PU1"/>
<dbReference type="STRING" id="295405.BF3748"/>
<dbReference type="KEGG" id="bfr:BF3748"/>
<dbReference type="PATRIC" id="fig|295405.11.peg.3596"/>
<dbReference type="HOGENOM" id="CLU_027486_0_1_10"/>
<dbReference type="OrthoDB" id="9777362at2"/>
<dbReference type="UniPathway" id="UPA00056">
    <property type="reaction ID" value="UER00097"/>
</dbReference>
<dbReference type="UniPathway" id="UPA00059">
    <property type="reaction ID" value="UER00105"/>
</dbReference>
<dbReference type="Proteomes" id="UP000002197">
    <property type="component" value="Chromosome"/>
</dbReference>
<dbReference type="GO" id="GO:0051539">
    <property type="term" value="F:4 iron, 4 sulfur cluster binding"/>
    <property type="evidence" value="ECO:0007669"/>
    <property type="project" value="UniProtKB-UniRule"/>
</dbReference>
<dbReference type="GO" id="GO:0051745">
    <property type="term" value="F:4-hydroxy-3-methylbut-2-enyl diphosphate reductase activity"/>
    <property type="evidence" value="ECO:0007669"/>
    <property type="project" value="UniProtKB-UniRule"/>
</dbReference>
<dbReference type="GO" id="GO:0046872">
    <property type="term" value="F:metal ion binding"/>
    <property type="evidence" value="ECO:0007669"/>
    <property type="project" value="UniProtKB-KW"/>
</dbReference>
<dbReference type="GO" id="GO:0050992">
    <property type="term" value="P:dimethylallyl diphosphate biosynthetic process"/>
    <property type="evidence" value="ECO:0007669"/>
    <property type="project" value="UniProtKB-UniRule"/>
</dbReference>
<dbReference type="GO" id="GO:0019288">
    <property type="term" value="P:isopentenyl diphosphate biosynthetic process, methylerythritol 4-phosphate pathway"/>
    <property type="evidence" value="ECO:0007669"/>
    <property type="project" value="UniProtKB-UniRule"/>
</dbReference>
<dbReference type="GO" id="GO:0016114">
    <property type="term" value="P:terpenoid biosynthetic process"/>
    <property type="evidence" value="ECO:0007669"/>
    <property type="project" value="UniProtKB-UniRule"/>
</dbReference>
<dbReference type="CDD" id="cd13944">
    <property type="entry name" value="lytB_ispH"/>
    <property type="match status" value="1"/>
</dbReference>
<dbReference type="Gene3D" id="3.40.50.11270">
    <property type="match status" value="1"/>
</dbReference>
<dbReference type="Gene3D" id="3.40.1010.20">
    <property type="entry name" value="4-hydroxy-3-methylbut-2-enyl diphosphate reductase, catalytic domain"/>
    <property type="match status" value="2"/>
</dbReference>
<dbReference type="HAMAP" id="MF_00191">
    <property type="entry name" value="IspH"/>
    <property type="match status" value="1"/>
</dbReference>
<dbReference type="InterPro" id="IPR003451">
    <property type="entry name" value="LytB/IspH"/>
</dbReference>
<dbReference type="NCBIfam" id="TIGR00216">
    <property type="entry name" value="ispH_lytB"/>
    <property type="match status" value="1"/>
</dbReference>
<dbReference type="NCBIfam" id="NF002187">
    <property type="entry name" value="PRK01045.1-1"/>
    <property type="match status" value="1"/>
</dbReference>
<dbReference type="PANTHER" id="PTHR30426">
    <property type="entry name" value="4-HYDROXY-3-METHYLBUT-2-ENYL DIPHOSPHATE REDUCTASE"/>
    <property type="match status" value="1"/>
</dbReference>
<dbReference type="PANTHER" id="PTHR30426:SF0">
    <property type="entry name" value="4-HYDROXY-3-METHYLBUT-2-ENYL DIPHOSPHATE REDUCTASE"/>
    <property type="match status" value="1"/>
</dbReference>
<dbReference type="Pfam" id="PF02401">
    <property type="entry name" value="LYTB"/>
    <property type="match status" value="1"/>
</dbReference>
<keyword id="KW-0004">4Fe-4S</keyword>
<keyword id="KW-0408">Iron</keyword>
<keyword id="KW-0411">Iron-sulfur</keyword>
<keyword id="KW-0414">Isoprene biosynthesis</keyword>
<keyword id="KW-0479">Metal-binding</keyword>
<keyword id="KW-0560">Oxidoreductase</keyword>
<organism>
    <name type="scientific">Bacteroides fragilis (strain YCH46)</name>
    <dbReference type="NCBI Taxonomy" id="295405"/>
    <lineage>
        <taxon>Bacteria</taxon>
        <taxon>Pseudomonadati</taxon>
        <taxon>Bacteroidota</taxon>
        <taxon>Bacteroidia</taxon>
        <taxon>Bacteroidales</taxon>
        <taxon>Bacteroidaceae</taxon>
        <taxon>Bacteroides</taxon>
    </lineage>
</organism>
<name>ISPH_BACFR</name>
<feature type="chain" id="PRO_0000128771" description="4-hydroxy-3-methylbut-2-enyl diphosphate reductase">
    <location>
        <begin position="1"/>
        <end position="290"/>
    </location>
</feature>
<feature type="active site" description="Proton donor" evidence="1">
    <location>
        <position position="131"/>
    </location>
</feature>
<feature type="binding site" evidence="1">
    <location>
        <position position="13"/>
    </location>
    <ligand>
        <name>[4Fe-4S] cluster</name>
        <dbReference type="ChEBI" id="CHEBI:49883"/>
    </ligand>
</feature>
<feature type="binding site" evidence="1">
    <location>
        <position position="41"/>
    </location>
    <ligand>
        <name>(2E)-4-hydroxy-3-methylbut-2-enyl diphosphate</name>
        <dbReference type="ChEBI" id="CHEBI:128753"/>
    </ligand>
</feature>
<feature type="binding site" evidence="1">
    <location>
        <position position="41"/>
    </location>
    <ligand>
        <name>dimethylallyl diphosphate</name>
        <dbReference type="ChEBI" id="CHEBI:57623"/>
    </ligand>
</feature>
<feature type="binding site" evidence="1">
    <location>
        <position position="41"/>
    </location>
    <ligand>
        <name>isopentenyl diphosphate</name>
        <dbReference type="ChEBI" id="CHEBI:128769"/>
    </ligand>
</feature>
<feature type="binding site" evidence="1">
    <location>
        <position position="75"/>
    </location>
    <ligand>
        <name>(2E)-4-hydroxy-3-methylbut-2-enyl diphosphate</name>
        <dbReference type="ChEBI" id="CHEBI:128753"/>
    </ligand>
</feature>
<feature type="binding site" evidence="1">
    <location>
        <position position="75"/>
    </location>
    <ligand>
        <name>dimethylallyl diphosphate</name>
        <dbReference type="ChEBI" id="CHEBI:57623"/>
    </ligand>
</feature>
<feature type="binding site" evidence="1">
    <location>
        <position position="75"/>
    </location>
    <ligand>
        <name>isopentenyl diphosphate</name>
        <dbReference type="ChEBI" id="CHEBI:128769"/>
    </ligand>
</feature>
<feature type="binding site" evidence="1">
    <location>
        <position position="97"/>
    </location>
    <ligand>
        <name>[4Fe-4S] cluster</name>
        <dbReference type="ChEBI" id="CHEBI:49883"/>
    </ligand>
</feature>
<feature type="binding site" evidence="1">
    <location>
        <position position="129"/>
    </location>
    <ligand>
        <name>(2E)-4-hydroxy-3-methylbut-2-enyl diphosphate</name>
        <dbReference type="ChEBI" id="CHEBI:128753"/>
    </ligand>
</feature>
<feature type="binding site" evidence="1">
    <location>
        <position position="129"/>
    </location>
    <ligand>
        <name>dimethylallyl diphosphate</name>
        <dbReference type="ChEBI" id="CHEBI:57623"/>
    </ligand>
</feature>
<feature type="binding site" evidence="1">
    <location>
        <position position="129"/>
    </location>
    <ligand>
        <name>isopentenyl diphosphate</name>
        <dbReference type="ChEBI" id="CHEBI:128769"/>
    </ligand>
</feature>
<feature type="binding site" evidence="1">
    <location>
        <position position="167"/>
    </location>
    <ligand>
        <name>(2E)-4-hydroxy-3-methylbut-2-enyl diphosphate</name>
        <dbReference type="ChEBI" id="CHEBI:128753"/>
    </ligand>
</feature>
<feature type="binding site" evidence="1">
    <location>
        <position position="198"/>
    </location>
    <ligand>
        <name>[4Fe-4S] cluster</name>
        <dbReference type="ChEBI" id="CHEBI:49883"/>
    </ligand>
</feature>
<feature type="binding site" evidence="1">
    <location>
        <position position="226"/>
    </location>
    <ligand>
        <name>(2E)-4-hydroxy-3-methylbut-2-enyl diphosphate</name>
        <dbReference type="ChEBI" id="CHEBI:128753"/>
    </ligand>
</feature>
<feature type="binding site" evidence="1">
    <location>
        <position position="226"/>
    </location>
    <ligand>
        <name>dimethylallyl diphosphate</name>
        <dbReference type="ChEBI" id="CHEBI:57623"/>
    </ligand>
</feature>
<feature type="binding site" evidence="1">
    <location>
        <position position="226"/>
    </location>
    <ligand>
        <name>isopentenyl diphosphate</name>
        <dbReference type="ChEBI" id="CHEBI:128769"/>
    </ligand>
</feature>
<feature type="binding site" evidence="1">
    <location>
        <position position="227"/>
    </location>
    <ligand>
        <name>(2E)-4-hydroxy-3-methylbut-2-enyl diphosphate</name>
        <dbReference type="ChEBI" id="CHEBI:128753"/>
    </ligand>
</feature>
<feature type="binding site" evidence="1">
    <location>
        <position position="227"/>
    </location>
    <ligand>
        <name>dimethylallyl diphosphate</name>
        <dbReference type="ChEBI" id="CHEBI:57623"/>
    </ligand>
</feature>
<feature type="binding site" evidence="1">
    <location>
        <position position="227"/>
    </location>
    <ligand>
        <name>isopentenyl diphosphate</name>
        <dbReference type="ChEBI" id="CHEBI:128769"/>
    </ligand>
</feature>
<feature type="binding site" evidence="1">
    <location>
        <position position="228"/>
    </location>
    <ligand>
        <name>(2E)-4-hydroxy-3-methylbut-2-enyl diphosphate</name>
        <dbReference type="ChEBI" id="CHEBI:128753"/>
    </ligand>
</feature>
<feature type="binding site" evidence="1">
    <location>
        <position position="228"/>
    </location>
    <ligand>
        <name>dimethylallyl diphosphate</name>
        <dbReference type="ChEBI" id="CHEBI:57623"/>
    </ligand>
</feature>
<feature type="binding site" evidence="1">
    <location>
        <position position="228"/>
    </location>
    <ligand>
        <name>isopentenyl diphosphate</name>
        <dbReference type="ChEBI" id="CHEBI:128769"/>
    </ligand>
</feature>
<feature type="binding site" evidence="1">
    <location>
        <position position="270"/>
    </location>
    <ligand>
        <name>(2E)-4-hydroxy-3-methylbut-2-enyl diphosphate</name>
        <dbReference type="ChEBI" id="CHEBI:128753"/>
    </ligand>
</feature>
<feature type="binding site" evidence="1">
    <location>
        <position position="270"/>
    </location>
    <ligand>
        <name>dimethylallyl diphosphate</name>
        <dbReference type="ChEBI" id="CHEBI:57623"/>
    </ligand>
</feature>
<feature type="binding site" evidence="1">
    <location>
        <position position="270"/>
    </location>
    <ligand>
        <name>isopentenyl diphosphate</name>
        <dbReference type="ChEBI" id="CHEBI:128769"/>
    </ligand>
</feature>
<proteinExistence type="inferred from homology"/>
<accession>Q64PU1</accession>
<reference key="1">
    <citation type="journal article" date="2004" name="Proc. Natl. Acad. Sci. U.S.A.">
        <title>Genomic analysis of Bacteroides fragilis reveals extensive DNA inversions regulating cell surface adaptation.</title>
        <authorList>
            <person name="Kuwahara T."/>
            <person name="Yamashita A."/>
            <person name="Hirakawa H."/>
            <person name="Nakayama H."/>
            <person name="Toh H."/>
            <person name="Okada N."/>
            <person name="Kuhara S."/>
            <person name="Hattori M."/>
            <person name="Hayashi T."/>
            <person name="Ohnishi Y."/>
        </authorList>
    </citation>
    <scope>NUCLEOTIDE SEQUENCE [LARGE SCALE GENOMIC DNA]</scope>
    <source>
        <strain>YCH46</strain>
    </source>
</reference>
<comment type="function">
    <text evidence="1">Catalyzes the conversion of 1-hydroxy-2-methyl-2-(E)-butenyl 4-diphosphate (HMBPP) into a mixture of isopentenyl diphosphate (IPP) and dimethylallyl diphosphate (DMAPP). Acts in the terminal step of the DOXP/MEP pathway for isoprenoid precursor biosynthesis.</text>
</comment>
<comment type="catalytic activity">
    <reaction evidence="1">
        <text>isopentenyl diphosphate + 2 oxidized [2Fe-2S]-[ferredoxin] + H2O = (2E)-4-hydroxy-3-methylbut-2-enyl diphosphate + 2 reduced [2Fe-2S]-[ferredoxin] + 2 H(+)</text>
        <dbReference type="Rhea" id="RHEA:24488"/>
        <dbReference type="Rhea" id="RHEA-COMP:10000"/>
        <dbReference type="Rhea" id="RHEA-COMP:10001"/>
        <dbReference type="ChEBI" id="CHEBI:15377"/>
        <dbReference type="ChEBI" id="CHEBI:15378"/>
        <dbReference type="ChEBI" id="CHEBI:33737"/>
        <dbReference type="ChEBI" id="CHEBI:33738"/>
        <dbReference type="ChEBI" id="CHEBI:128753"/>
        <dbReference type="ChEBI" id="CHEBI:128769"/>
        <dbReference type="EC" id="1.17.7.4"/>
    </reaction>
</comment>
<comment type="catalytic activity">
    <reaction evidence="1">
        <text>dimethylallyl diphosphate + 2 oxidized [2Fe-2S]-[ferredoxin] + H2O = (2E)-4-hydroxy-3-methylbut-2-enyl diphosphate + 2 reduced [2Fe-2S]-[ferredoxin] + 2 H(+)</text>
        <dbReference type="Rhea" id="RHEA:24825"/>
        <dbReference type="Rhea" id="RHEA-COMP:10000"/>
        <dbReference type="Rhea" id="RHEA-COMP:10001"/>
        <dbReference type="ChEBI" id="CHEBI:15377"/>
        <dbReference type="ChEBI" id="CHEBI:15378"/>
        <dbReference type="ChEBI" id="CHEBI:33737"/>
        <dbReference type="ChEBI" id="CHEBI:33738"/>
        <dbReference type="ChEBI" id="CHEBI:57623"/>
        <dbReference type="ChEBI" id="CHEBI:128753"/>
        <dbReference type="EC" id="1.17.7.4"/>
    </reaction>
</comment>
<comment type="cofactor">
    <cofactor evidence="1">
        <name>[4Fe-4S] cluster</name>
        <dbReference type="ChEBI" id="CHEBI:49883"/>
    </cofactor>
    <text evidence="1">Binds 1 [4Fe-4S] cluster per subunit.</text>
</comment>
<comment type="pathway">
    <text evidence="1">Isoprenoid biosynthesis; dimethylallyl diphosphate biosynthesis; dimethylallyl diphosphate from (2E)-4-hydroxy-3-methylbutenyl diphosphate: step 1/1.</text>
</comment>
<comment type="pathway">
    <text evidence="1">Isoprenoid biosynthesis; isopentenyl diphosphate biosynthesis via DXP pathway; isopentenyl diphosphate from 1-deoxy-D-xylulose 5-phosphate: step 6/6.</text>
</comment>
<comment type="similarity">
    <text evidence="1">Belongs to the IspH family.</text>
</comment>